<proteinExistence type="inferred from homology"/>
<accession>Q8FCY2</accession>
<sequence>MKRIAFVFSTVPHGTAAGREGLDALLATSALTDDLAVFFIADGVFQLLPGQKPDAVLARDYIATFKLLGLYDIEQCWVCAASLRERGLDPQTPFVVEATPLEADALRRELANYDVILRF</sequence>
<keyword id="KW-0963">Cytoplasm</keyword>
<keyword id="KW-1185">Reference proteome</keyword>
<keyword id="KW-0819">tRNA processing</keyword>
<gene>
    <name evidence="1" type="primary">tusC</name>
    <name type="ordered locus">c4118</name>
</gene>
<protein>
    <recommendedName>
        <fullName evidence="1">Protein TusC</fullName>
    </recommendedName>
    <alternativeName>
        <fullName evidence="1">tRNA 2-thiouridine synthesizing protein C</fullName>
    </alternativeName>
</protein>
<organism>
    <name type="scientific">Escherichia coli O6:H1 (strain CFT073 / ATCC 700928 / UPEC)</name>
    <dbReference type="NCBI Taxonomy" id="199310"/>
    <lineage>
        <taxon>Bacteria</taxon>
        <taxon>Pseudomonadati</taxon>
        <taxon>Pseudomonadota</taxon>
        <taxon>Gammaproteobacteria</taxon>
        <taxon>Enterobacterales</taxon>
        <taxon>Enterobacteriaceae</taxon>
        <taxon>Escherichia</taxon>
    </lineage>
</organism>
<name>TUSC_ECOL6</name>
<evidence type="ECO:0000255" key="1">
    <source>
        <dbReference type="HAMAP-Rule" id="MF_00389"/>
    </source>
</evidence>
<feature type="chain" id="PRO_0000214885" description="Protein TusC">
    <location>
        <begin position="1"/>
        <end position="119"/>
    </location>
</feature>
<reference key="1">
    <citation type="journal article" date="2002" name="Proc. Natl. Acad. Sci. U.S.A.">
        <title>Extensive mosaic structure revealed by the complete genome sequence of uropathogenic Escherichia coli.</title>
        <authorList>
            <person name="Welch R.A."/>
            <person name="Burland V."/>
            <person name="Plunkett G. III"/>
            <person name="Redford P."/>
            <person name="Roesch P."/>
            <person name="Rasko D."/>
            <person name="Buckles E.L."/>
            <person name="Liou S.-R."/>
            <person name="Boutin A."/>
            <person name="Hackett J."/>
            <person name="Stroud D."/>
            <person name="Mayhew G.F."/>
            <person name="Rose D.J."/>
            <person name="Zhou S."/>
            <person name="Schwartz D.C."/>
            <person name="Perna N.T."/>
            <person name="Mobley H.L.T."/>
            <person name="Donnenberg M.S."/>
            <person name="Blattner F.R."/>
        </authorList>
    </citation>
    <scope>NUCLEOTIDE SEQUENCE [LARGE SCALE GENOMIC DNA]</scope>
    <source>
        <strain>CFT073 / ATCC 700928 / UPEC</strain>
    </source>
</reference>
<dbReference type="EMBL" id="AE014075">
    <property type="protein sequence ID" value="AAN82556.1"/>
    <property type="molecule type" value="Genomic_DNA"/>
</dbReference>
<dbReference type="RefSeq" id="WP_000820734.1">
    <property type="nucleotide sequence ID" value="NZ_CP051263.1"/>
</dbReference>
<dbReference type="SMR" id="Q8FCY2"/>
<dbReference type="STRING" id="199310.c4118"/>
<dbReference type="KEGG" id="ecc:c4118"/>
<dbReference type="eggNOG" id="COG2923">
    <property type="taxonomic scope" value="Bacteria"/>
</dbReference>
<dbReference type="HOGENOM" id="CLU_155943_1_0_6"/>
<dbReference type="BioCyc" id="ECOL199310:C4118-MONOMER"/>
<dbReference type="Proteomes" id="UP000001410">
    <property type="component" value="Chromosome"/>
</dbReference>
<dbReference type="GO" id="GO:0005737">
    <property type="term" value="C:cytoplasm"/>
    <property type="evidence" value="ECO:0007669"/>
    <property type="project" value="UniProtKB-SubCell"/>
</dbReference>
<dbReference type="GO" id="GO:0008033">
    <property type="term" value="P:tRNA processing"/>
    <property type="evidence" value="ECO:0007669"/>
    <property type="project" value="UniProtKB-UniRule"/>
</dbReference>
<dbReference type="FunFam" id="3.40.1260.10:FF:000004">
    <property type="entry name" value="Sulfurtransferase TusC"/>
    <property type="match status" value="1"/>
</dbReference>
<dbReference type="Gene3D" id="3.40.1260.10">
    <property type="entry name" value="DsrEFH-like"/>
    <property type="match status" value="1"/>
</dbReference>
<dbReference type="HAMAP" id="MF_00389">
    <property type="entry name" value="Thiourid_synth_C"/>
    <property type="match status" value="1"/>
</dbReference>
<dbReference type="InterPro" id="IPR027396">
    <property type="entry name" value="DsrEFH-like"/>
</dbReference>
<dbReference type="InterPro" id="IPR003787">
    <property type="entry name" value="Sulphur_relay_DsrE/F-like"/>
</dbReference>
<dbReference type="InterPro" id="IPR037450">
    <property type="entry name" value="Sulphur_relay_TusC"/>
</dbReference>
<dbReference type="InterPro" id="IPR017462">
    <property type="entry name" value="Sulphur_relay_TusC/DsrF"/>
</dbReference>
<dbReference type="NCBIfam" id="NF001238">
    <property type="entry name" value="PRK00211.1"/>
    <property type="match status" value="1"/>
</dbReference>
<dbReference type="NCBIfam" id="TIGR03010">
    <property type="entry name" value="sulf_tusC_dsrF"/>
    <property type="match status" value="1"/>
</dbReference>
<dbReference type="PANTHER" id="PTHR38780">
    <property type="entry name" value="PROTEIN TUSC"/>
    <property type="match status" value="1"/>
</dbReference>
<dbReference type="PANTHER" id="PTHR38780:SF1">
    <property type="entry name" value="PROTEIN TUSC"/>
    <property type="match status" value="1"/>
</dbReference>
<dbReference type="Pfam" id="PF02635">
    <property type="entry name" value="DsrE"/>
    <property type="match status" value="1"/>
</dbReference>
<dbReference type="SUPFAM" id="SSF75169">
    <property type="entry name" value="DsrEFH-like"/>
    <property type="match status" value="1"/>
</dbReference>
<comment type="function">
    <text evidence="1">Part of a sulfur-relay system required for 2-thiolation of 5-methylaminomethyl-2-thiouridine (mnm(5)s(2)U) at tRNA wobble positions.</text>
</comment>
<comment type="subunit">
    <text evidence="1">Heterohexamer, formed by a dimer of trimers. The hexameric TusBCD complex contains 2 copies each of TusB, TusC and TusD. The TusBCD complex interacts with TusE.</text>
</comment>
<comment type="subcellular location">
    <subcellularLocation>
        <location evidence="1">Cytoplasm</location>
    </subcellularLocation>
</comment>
<comment type="similarity">
    <text evidence="1">Belongs to the DsrF/TusC family.</text>
</comment>